<feature type="chain" id="PRO_0000362614" description="NADH-quinone oxidoreductase subunit A">
    <location>
        <begin position="1"/>
        <end position="183"/>
    </location>
</feature>
<feature type="transmembrane region" description="Helical" evidence="1">
    <location>
        <begin position="11"/>
        <end position="31"/>
    </location>
</feature>
<feature type="transmembrane region" description="Helical" evidence="1">
    <location>
        <begin position="63"/>
        <end position="83"/>
    </location>
</feature>
<feature type="transmembrane region" description="Helical" evidence="1">
    <location>
        <begin position="98"/>
        <end position="118"/>
    </location>
</feature>
<feature type="region of interest" description="Disordered" evidence="2">
    <location>
        <begin position="159"/>
        <end position="183"/>
    </location>
</feature>
<gene>
    <name evidence="1" type="primary">nuoA</name>
    <name type="ordered locus">ABAYE3060</name>
</gene>
<accession>B0V7U8</accession>
<organism>
    <name type="scientific">Acinetobacter baumannii (strain AYE)</name>
    <dbReference type="NCBI Taxonomy" id="509173"/>
    <lineage>
        <taxon>Bacteria</taxon>
        <taxon>Pseudomonadati</taxon>
        <taxon>Pseudomonadota</taxon>
        <taxon>Gammaproteobacteria</taxon>
        <taxon>Moraxellales</taxon>
        <taxon>Moraxellaceae</taxon>
        <taxon>Acinetobacter</taxon>
        <taxon>Acinetobacter calcoaceticus/baumannii complex</taxon>
    </lineage>
</organism>
<proteinExistence type="inferred from homology"/>
<name>NUOA_ACIBY</name>
<keyword id="KW-0997">Cell inner membrane</keyword>
<keyword id="KW-1003">Cell membrane</keyword>
<keyword id="KW-0472">Membrane</keyword>
<keyword id="KW-0520">NAD</keyword>
<keyword id="KW-0874">Quinone</keyword>
<keyword id="KW-1278">Translocase</keyword>
<keyword id="KW-0812">Transmembrane</keyword>
<keyword id="KW-1133">Transmembrane helix</keyword>
<keyword id="KW-0813">Transport</keyword>
<keyword id="KW-0830">Ubiquinone</keyword>
<evidence type="ECO:0000255" key="1">
    <source>
        <dbReference type="HAMAP-Rule" id="MF_01394"/>
    </source>
</evidence>
<evidence type="ECO:0000256" key="2">
    <source>
        <dbReference type="SAM" id="MobiDB-lite"/>
    </source>
</evidence>
<comment type="function">
    <text evidence="1">NDH-1 shuttles electrons from NADH, via FMN and iron-sulfur (Fe-S) centers, to quinones in the respiratory chain. The immediate electron acceptor for the enzyme in this species is believed to be ubiquinone. Couples the redox reaction to proton translocation (for every two electrons transferred, four hydrogen ions are translocated across the cytoplasmic membrane), and thus conserves the redox energy in a proton gradient.</text>
</comment>
<comment type="catalytic activity">
    <reaction evidence="1">
        <text>a quinone + NADH + 5 H(+)(in) = a quinol + NAD(+) + 4 H(+)(out)</text>
        <dbReference type="Rhea" id="RHEA:57888"/>
        <dbReference type="ChEBI" id="CHEBI:15378"/>
        <dbReference type="ChEBI" id="CHEBI:24646"/>
        <dbReference type="ChEBI" id="CHEBI:57540"/>
        <dbReference type="ChEBI" id="CHEBI:57945"/>
        <dbReference type="ChEBI" id="CHEBI:132124"/>
    </reaction>
</comment>
<comment type="subunit">
    <text evidence="1">NDH-1 is composed of 14 different subunits. Subunits NuoA, H, J, K, L, M, N constitute the membrane sector of the complex.</text>
</comment>
<comment type="subcellular location">
    <subcellularLocation>
        <location evidence="1">Cell inner membrane</location>
        <topology evidence="1">Multi-pass membrane protein</topology>
    </subcellularLocation>
</comment>
<comment type="similarity">
    <text evidence="1">Belongs to the complex I subunit 3 family.</text>
</comment>
<protein>
    <recommendedName>
        <fullName evidence="1">NADH-quinone oxidoreductase subunit A</fullName>
        <ecNumber evidence="1">7.1.1.-</ecNumber>
    </recommendedName>
    <alternativeName>
        <fullName evidence="1">NADH dehydrogenase I subunit A</fullName>
    </alternativeName>
    <alternativeName>
        <fullName evidence="1">NDH-1 subunit A</fullName>
    </alternativeName>
    <alternativeName>
        <fullName evidence="1">NUO1</fullName>
    </alternativeName>
</protein>
<sequence length="183" mass="19966">MSAITPYDWAIIAFVIGVTFLCVFMLTVPLLLGGKSWGRAKQEQFESGVVSAGGARIRLSAKFYLVAIFFVVFDLEALYLYAWSTSVREVGWLGYTTVVIFVVDLLIALVYAFSVGALSWAPADRRKLAGEKVKVGSPTMNIAEITRFNSIEELVTDPTGQIPAQSSGRVKSKTTPALSSEKE</sequence>
<dbReference type="EC" id="7.1.1.-" evidence="1"/>
<dbReference type="EMBL" id="CU459141">
    <property type="protein sequence ID" value="CAM87879.1"/>
    <property type="molecule type" value="Genomic_DNA"/>
</dbReference>
<dbReference type="SMR" id="B0V7U8"/>
<dbReference type="EnsemblBacteria" id="CAM87879">
    <property type="protein sequence ID" value="CAM87879"/>
    <property type="gene ID" value="ABAYE3060"/>
</dbReference>
<dbReference type="KEGG" id="aby:ABAYE3060"/>
<dbReference type="HOGENOM" id="CLU_1486001_0_0_6"/>
<dbReference type="GO" id="GO:0030964">
    <property type="term" value="C:NADH dehydrogenase complex"/>
    <property type="evidence" value="ECO:0007669"/>
    <property type="project" value="TreeGrafter"/>
</dbReference>
<dbReference type="GO" id="GO:0005886">
    <property type="term" value="C:plasma membrane"/>
    <property type="evidence" value="ECO:0007669"/>
    <property type="project" value="UniProtKB-SubCell"/>
</dbReference>
<dbReference type="GO" id="GO:0008137">
    <property type="term" value="F:NADH dehydrogenase (ubiquinone) activity"/>
    <property type="evidence" value="ECO:0007669"/>
    <property type="project" value="InterPro"/>
</dbReference>
<dbReference type="GO" id="GO:0050136">
    <property type="term" value="F:NADH:ubiquinone reductase (non-electrogenic) activity"/>
    <property type="evidence" value="ECO:0007669"/>
    <property type="project" value="UniProtKB-UniRule"/>
</dbReference>
<dbReference type="GO" id="GO:0048038">
    <property type="term" value="F:quinone binding"/>
    <property type="evidence" value="ECO:0007669"/>
    <property type="project" value="UniProtKB-KW"/>
</dbReference>
<dbReference type="Gene3D" id="1.20.58.1610">
    <property type="entry name" value="NADH:ubiquinone/plastoquinone oxidoreductase, chain 3"/>
    <property type="match status" value="1"/>
</dbReference>
<dbReference type="HAMAP" id="MF_01394">
    <property type="entry name" value="NDH1_NuoA"/>
    <property type="match status" value="1"/>
</dbReference>
<dbReference type="InterPro" id="IPR023043">
    <property type="entry name" value="NAD(P)H_OxRDtase_bac/plastid"/>
</dbReference>
<dbReference type="InterPro" id="IPR000440">
    <property type="entry name" value="NADH_UbQ/plastoQ_OxRdtase_su3"/>
</dbReference>
<dbReference type="InterPro" id="IPR038430">
    <property type="entry name" value="NDAH_ubi_oxred_su3_sf"/>
</dbReference>
<dbReference type="PANTHER" id="PTHR11058:SF21">
    <property type="entry name" value="NADH-QUINONE OXIDOREDUCTASE SUBUNIT A"/>
    <property type="match status" value="1"/>
</dbReference>
<dbReference type="PANTHER" id="PTHR11058">
    <property type="entry name" value="NADH-UBIQUINONE OXIDOREDUCTASE CHAIN 3"/>
    <property type="match status" value="1"/>
</dbReference>
<dbReference type="Pfam" id="PF00507">
    <property type="entry name" value="Oxidored_q4"/>
    <property type="match status" value="1"/>
</dbReference>
<reference key="1">
    <citation type="journal article" date="2008" name="PLoS ONE">
        <title>Comparative analysis of Acinetobacters: three genomes for three lifestyles.</title>
        <authorList>
            <person name="Vallenet D."/>
            <person name="Nordmann P."/>
            <person name="Barbe V."/>
            <person name="Poirel L."/>
            <person name="Mangenot S."/>
            <person name="Bataille E."/>
            <person name="Dossat C."/>
            <person name="Gas S."/>
            <person name="Kreimeyer A."/>
            <person name="Lenoble P."/>
            <person name="Oztas S."/>
            <person name="Poulain J."/>
            <person name="Segurens B."/>
            <person name="Robert C."/>
            <person name="Abergel C."/>
            <person name="Claverie J.-M."/>
            <person name="Raoult D."/>
            <person name="Medigue C."/>
            <person name="Weissenbach J."/>
            <person name="Cruveiller S."/>
        </authorList>
    </citation>
    <scope>NUCLEOTIDE SEQUENCE [LARGE SCALE GENOMIC DNA]</scope>
    <source>
        <strain>AYE</strain>
    </source>
</reference>